<feature type="chain" id="PRO_0000423704" description="NAP1-related protein 1">
    <location>
        <begin position="1"/>
        <end position="259"/>
    </location>
</feature>
<feature type="region of interest" description="Disordered" evidence="3">
    <location>
        <begin position="1"/>
        <end position="20"/>
    </location>
</feature>
<feature type="region of interest" description="Disordered" evidence="3">
    <location>
        <begin position="228"/>
        <end position="259"/>
    </location>
</feature>
<feature type="coiled-coil region" evidence="2">
    <location>
        <begin position="21"/>
        <end position="62"/>
    </location>
</feature>
<feature type="compositionally biased region" description="Basic and acidic residues" evidence="3">
    <location>
        <begin position="1"/>
        <end position="15"/>
    </location>
</feature>
<sequence length="259" mass="29998">MAAAEQKGKKPRTDGAEAEPVDAALLQSIEKLQEIQDEIEKVNEEACDKVLELEQKYNEVRRPVYVRRNKIIKQIPDFWLTAFLSHPMLGELLTEDDQKIFKHLESIDVDDSEDIKSGYSITLTFSPNPYFEDTKLTKTYSFSDDEAVKVKATSIRWKKGMDIANDRAYTKKGDKRILIDESFFTWFNSEKNRSFAHGAMDEVADVIKEDLWPNPLKYFNNEFEEELELLDDDDEVSDDDDEEEDDEDQGEGEEDGEEN</sequence>
<proteinExistence type="inferred from homology"/>
<comment type="function">
    <text evidence="1">Acts as a histone H2A/H2B chaperone in nucleosome assembly.</text>
</comment>
<comment type="subcellular location">
    <subcellularLocation>
        <location evidence="1">Nucleus</location>
    </subcellularLocation>
    <subcellularLocation>
        <location evidence="1">Cytoplasm</location>
    </subcellularLocation>
</comment>
<comment type="domain">
    <text>The acidic domain is probably involved in the interaction with histones.</text>
</comment>
<comment type="similarity">
    <text evidence="4">Belongs to the nucleosome assembly protein (NAP) family.</text>
</comment>
<gene>
    <name type="ORF">H0219H12.3</name>
    <name type="ORF">OsI_16162</name>
    <name type="ORF">OSIGBa0097P08.8</name>
</gene>
<reference key="1">
    <citation type="journal article" date="2002" name="Nature">
        <title>Sequence and analysis of rice chromosome 4.</title>
        <authorList>
            <person name="Feng Q."/>
            <person name="Zhang Y."/>
            <person name="Hao P."/>
            <person name="Wang S."/>
            <person name="Fu G."/>
            <person name="Huang Y."/>
            <person name="Li Y."/>
            <person name="Zhu J."/>
            <person name="Liu Y."/>
            <person name="Hu X."/>
            <person name="Jia P."/>
            <person name="Zhang Y."/>
            <person name="Zhao Q."/>
            <person name="Ying K."/>
            <person name="Yu S."/>
            <person name="Tang Y."/>
            <person name="Weng Q."/>
            <person name="Zhang L."/>
            <person name="Lu Y."/>
            <person name="Mu J."/>
            <person name="Lu Y."/>
            <person name="Zhang L.S."/>
            <person name="Yu Z."/>
            <person name="Fan D."/>
            <person name="Liu X."/>
            <person name="Lu T."/>
            <person name="Li C."/>
            <person name="Wu Y."/>
            <person name="Sun T."/>
            <person name="Lei H."/>
            <person name="Li T."/>
            <person name="Hu H."/>
            <person name="Guan J."/>
            <person name="Wu M."/>
            <person name="Zhang R."/>
            <person name="Zhou B."/>
            <person name="Chen Z."/>
            <person name="Chen L."/>
            <person name="Jin Z."/>
            <person name="Wang R."/>
            <person name="Yin H."/>
            <person name="Cai Z."/>
            <person name="Ren S."/>
            <person name="Lv G."/>
            <person name="Gu W."/>
            <person name="Zhu G."/>
            <person name="Tu Y."/>
            <person name="Jia J."/>
            <person name="Zhang Y."/>
            <person name="Chen J."/>
            <person name="Kang H."/>
            <person name="Chen X."/>
            <person name="Shao C."/>
            <person name="Sun Y."/>
            <person name="Hu Q."/>
            <person name="Zhang X."/>
            <person name="Zhang W."/>
            <person name="Wang L."/>
            <person name="Ding C."/>
            <person name="Sheng H."/>
            <person name="Gu J."/>
            <person name="Chen S."/>
            <person name="Ni L."/>
            <person name="Zhu F."/>
            <person name="Chen W."/>
            <person name="Lan L."/>
            <person name="Lai Y."/>
            <person name="Cheng Z."/>
            <person name="Gu M."/>
            <person name="Jiang J."/>
            <person name="Li J."/>
            <person name="Hong G."/>
            <person name="Xue Y."/>
            <person name="Han B."/>
        </authorList>
    </citation>
    <scope>NUCLEOTIDE SEQUENCE [LARGE SCALE GENOMIC DNA]</scope>
    <source>
        <strain>cv. Guang-Lu-Ai No.4</strain>
    </source>
</reference>
<reference key="2">
    <citation type="journal article" date="2005" name="PLoS Biol.">
        <title>The genomes of Oryza sativa: a history of duplications.</title>
        <authorList>
            <person name="Yu J."/>
            <person name="Wang J."/>
            <person name="Lin W."/>
            <person name="Li S."/>
            <person name="Li H."/>
            <person name="Zhou J."/>
            <person name="Ni P."/>
            <person name="Dong W."/>
            <person name="Hu S."/>
            <person name="Zeng C."/>
            <person name="Zhang J."/>
            <person name="Zhang Y."/>
            <person name="Li R."/>
            <person name="Xu Z."/>
            <person name="Li S."/>
            <person name="Li X."/>
            <person name="Zheng H."/>
            <person name="Cong L."/>
            <person name="Lin L."/>
            <person name="Yin J."/>
            <person name="Geng J."/>
            <person name="Li G."/>
            <person name="Shi J."/>
            <person name="Liu J."/>
            <person name="Lv H."/>
            <person name="Li J."/>
            <person name="Wang J."/>
            <person name="Deng Y."/>
            <person name="Ran L."/>
            <person name="Shi X."/>
            <person name="Wang X."/>
            <person name="Wu Q."/>
            <person name="Li C."/>
            <person name="Ren X."/>
            <person name="Wang J."/>
            <person name="Wang X."/>
            <person name="Li D."/>
            <person name="Liu D."/>
            <person name="Zhang X."/>
            <person name="Ji Z."/>
            <person name="Zhao W."/>
            <person name="Sun Y."/>
            <person name="Zhang Z."/>
            <person name="Bao J."/>
            <person name="Han Y."/>
            <person name="Dong L."/>
            <person name="Ji J."/>
            <person name="Chen P."/>
            <person name="Wu S."/>
            <person name="Liu J."/>
            <person name="Xiao Y."/>
            <person name="Bu D."/>
            <person name="Tan J."/>
            <person name="Yang L."/>
            <person name="Ye C."/>
            <person name="Zhang J."/>
            <person name="Xu J."/>
            <person name="Zhou Y."/>
            <person name="Yu Y."/>
            <person name="Zhang B."/>
            <person name="Zhuang S."/>
            <person name="Wei H."/>
            <person name="Liu B."/>
            <person name="Lei M."/>
            <person name="Yu H."/>
            <person name="Li Y."/>
            <person name="Xu H."/>
            <person name="Wei S."/>
            <person name="He X."/>
            <person name="Fang L."/>
            <person name="Zhang Z."/>
            <person name="Zhang Y."/>
            <person name="Huang X."/>
            <person name="Su Z."/>
            <person name="Tong W."/>
            <person name="Li J."/>
            <person name="Tong Z."/>
            <person name="Li S."/>
            <person name="Ye J."/>
            <person name="Wang L."/>
            <person name="Fang L."/>
            <person name="Lei T."/>
            <person name="Chen C.-S."/>
            <person name="Chen H.-C."/>
            <person name="Xu Z."/>
            <person name="Li H."/>
            <person name="Huang H."/>
            <person name="Zhang F."/>
            <person name="Xu H."/>
            <person name="Li N."/>
            <person name="Zhao C."/>
            <person name="Li S."/>
            <person name="Dong L."/>
            <person name="Huang Y."/>
            <person name="Li L."/>
            <person name="Xi Y."/>
            <person name="Qi Q."/>
            <person name="Li W."/>
            <person name="Zhang B."/>
            <person name="Hu W."/>
            <person name="Zhang Y."/>
            <person name="Tian X."/>
            <person name="Jiao Y."/>
            <person name="Liang X."/>
            <person name="Jin J."/>
            <person name="Gao L."/>
            <person name="Zheng W."/>
            <person name="Hao B."/>
            <person name="Liu S.-M."/>
            <person name="Wang W."/>
            <person name="Yuan L."/>
            <person name="Cao M."/>
            <person name="McDermott J."/>
            <person name="Samudrala R."/>
            <person name="Wang J."/>
            <person name="Wong G.K.-S."/>
            <person name="Yang H."/>
        </authorList>
    </citation>
    <scope>NUCLEOTIDE SEQUENCE [LARGE SCALE GENOMIC DNA]</scope>
    <source>
        <strain>cv. 93-11</strain>
    </source>
</reference>
<dbReference type="EMBL" id="CR855169">
    <property type="protein sequence ID" value="CAH67078.1"/>
    <property type="molecule type" value="Genomic_DNA"/>
</dbReference>
<dbReference type="EMBL" id="CR855203">
    <property type="protein sequence ID" value="CAH67446.1"/>
    <property type="molecule type" value="Genomic_DNA"/>
</dbReference>
<dbReference type="EMBL" id="CM000129">
    <property type="protein sequence ID" value="EAY94395.1"/>
    <property type="molecule type" value="Genomic_DNA"/>
</dbReference>
<dbReference type="SMR" id="A2XU85"/>
<dbReference type="STRING" id="39946.A2XU85"/>
<dbReference type="iPTMnet" id="A2XU85"/>
<dbReference type="EnsemblPlants" id="BGIOSGA014963-TA">
    <property type="protein sequence ID" value="BGIOSGA014963-PA"/>
    <property type="gene ID" value="BGIOSGA014963"/>
</dbReference>
<dbReference type="EnsemblPlants" id="OsIR64_04g0015080.01">
    <property type="protein sequence ID" value="OsIR64_04g0015080.01"/>
    <property type="gene ID" value="OsIR64_04g0015080"/>
</dbReference>
<dbReference type="EnsemblPlants" id="OsLima_04g0015610.01">
    <property type="protein sequence ID" value="OsLima_04g0015610.01"/>
    <property type="gene ID" value="OsLima_04g0015610"/>
</dbReference>
<dbReference type="EnsemblPlants" id="OsMH63_04G016410_01">
    <property type="protein sequence ID" value="OsMH63_04G016410_01"/>
    <property type="gene ID" value="OsMH63_04G016410"/>
</dbReference>
<dbReference type="EnsemblPlants" id="OsPr106_04g0016280.01">
    <property type="protein sequence ID" value="OsPr106_04g0016280.01"/>
    <property type="gene ID" value="OsPr106_04g0016280"/>
</dbReference>
<dbReference type="EnsemblPlants" id="OsZS97_04G016430_01">
    <property type="protein sequence ID" value="OsZS97_04G016430_01"/>
    <property type="gene ID" value="OsZS97_04G016430"/>
</dbReference>
<dbReference type="Gramene" id="BGIOSGA014963-TA">
    <property type="protein sequence ID" value="BGIOSGA014963-PA"/>
    <property type="gene ID" value="BGIOSGA014963"/>
</dbReference>
<dbReference type="Gramene" id="OsIR64_04g0015080.01">
    <property type="protein sequence ID" value="OsIR64_04g0015080.01"/>
    <property type="gene ID" value="OsIR64_04g0015080"/>
</dbReference>
<dbReference type="Gramene" id="OsLima_04g0015610.01">
    <property type="protein sequence ID" value="OsLima_04g0015610.01"/>
    <property type="gene ID" value="OsLima_04g0015610"/>
</dbReference>
<dbReference type="Gramene" id="OsMH63_04G016410_01">
    <property type="protein sequence ID" value="OsMH63_04G016410_01"/>
    <property type="gene ID" value="OsMH63_04G016410"/>
</dbReference>
<dbReference type="Gramene" id="OsPr106_04g0016280.01">
    <property type="protein sequence ID" value="OsPr106_04g0016280.01"/>
    <property type="gene ID" value="OsPr106_04g0016280"/>
</dbReference>
<dbReference type="Gramene" id="OsZS97_04G016430_01">
    <property type="protein sequence ID" value="OsZS97_04G016430_01"/>
    <property type="gene ID" value="OsZS97_04G016430"/>
</dbReference>
<dbReference type="HOGENOM" id="CLU_051687_0_0_1"/>
<dbReference type="OMA" id="RFTFEFK"/>
<dbReference type="Proteomes" id="UP000007015">
    <property type="component" value="Chromosome 4"/>
</dbReference>
<dbReference type="GO" id="GO:0005737">
    <property type="term" value="C:cytoplasm"/>
    <property type="evidence" value="ECO:0007669"/>
    <property type="project" value="UniProtKB-SubCell"/>
</dbReference>
<dbReference type="GO" id="GO:0005634">
    <property type="term" value="C:nucleus"/>
    <property type="evidence" value="ECO:0007669"/>
    <property type="project" value="UniProtKB-SubCell"/>
</dbReference>
<dbReference type="GO" id="GO:0042393">
    <property type="term" value="F:histone binding"/>
    <property type="evidence" value="ECO:0007669"/>
    <property type="project" value="UniProtKB-ARBA"/>
</dbReference>
<dbReference type="GO" id="GO:0000724">
    <property type="term" value="P:double-strand break repair via homologous recombination"/>
    <property type="evidence" value="ECO:0007669"/>
    <property type="project" value="UniProtKB-ARBA"/>
</dbReference>
<dbReference type="GO" id="GO:0006334">
    <property type="term" value="P:nucleosome assembly"/>
    <property type="evidence" value="ECO:0007669"/>
    <property type="project" value="InterPro"/>
</dbReference>
<dbReference type="Gene3D" id="1.20.5.1500">
    <property type="match status" value="1"/>
</dbReference>
<dbReference type="Gene3D" id="3.30.1120.90">
    <property type="entry name" value="Nucleosome assembly protein"/>
    <property type="match status" value="1"/>
</dbReference>
<dbReference type="InterPro" id="IPR037231">
    <property type="entry name" value="NAP-like_sf"/>
</dbReference>
<dbReference type="InterPro" id="IPR002164">
    <property type="entry name" value="NAP_family"/>
</dbReference>
<dbReference type="PANTHER" id="PTHR11875">
    <property type="entry name" value="TESTIS-SPECIFIC Y-ENCODED PROTEIN"/>
    <property type="match status" value="1"/>
</dbReference>
<dbReference type="Pfam" id="PF00956">
    <property type="entry name" value="NAP"/>
    <property type="match status" value="1"/>
</dbReference>
<dbReference type="SUPFAM" id="SSF143113">
    <property type="entry name" value="NAP-like"/>
    <property type="match status" value="1"/>
</dbReference>
<keyword id="KW-0143">Chaperone</keyword>
<keyword id="KW-0175">Coiled coil</keyword>
<keyword id="KW-0963">Cytoplasm</keyword>
<keyword id="KW-0539">Nucleus</keyword>
<keyword id="KW-1185">Reference proteome</keyword>
<evidence type="ECO:0000250" key="1"/>
<evidence type="ECO:0000255" key="2"/>
<evidence type="ECO:0000256" key="3">
    <source>
        <dbReference type="SAM" id="MobiDB-lite"/>
    </source>
</evidence>
<evidence type="ECO:0000305" key="4"/>
<organism>
    <name type="scientific">Oryza sativa subsp. indica</name>
    <name type="common">Rice</name>
    <dbReference type="NCBI Taxonomy" id="39946"/>
    <lineage>
        <taxon>Eukaryota</taxon>
        <taxon>Viridiplantae</taxon>
        <taxon>Streptophyta</taxon>
        <taxon>Embryophyta</taxon>
        <taxon>Tracheophyta</taxon>
        <taxon>Spermatophyta</taxon>
        <taxon>Magnoliopsida</taxon>
        <taxon>Liliopsida</taxon>
        <taxon>Poales</taxon>
        <taxon>Poaceae</taxon>
        <taxon>BOP clade</taxon>
        <taxon>Oryzoideae</taxon>
        <taxon>Oryzeae</taxon>
        <taxon>Oryzinae</taxon>
        <taxon>Oryza</taxon>
        <taxon>Oryza sativa</taxon>
    </lineage>
</organism>
<protein>
    <recommendedName>
        <fullName>NAP1-related protein 1</fullName>
    </recommendedName>
    <alternativeName>
        <fullName>Protein SET homolog 1</fullName>
    </alternativeName>
</protein>
<accession>A2XU85</accession>
<accession>Q01IJ4</accession>
<name>NRP1_ORYSI</name>